<accession>Q978F5</accession>
<sequence>MQRERTNETSLRVVSKEKDSIIVEMINYDNTLLRTLVEEILKDDQVIEARYYIKHPIIDNPQIYVKVKSGKPQAAIKRSIRKLSKLYEDLGAQVEKEIEKYRSNHIIKTTE</sequence>
<evidence type="ECO:0000255" key="1">
    <source>
        <dbReference type="HAMAP-Rule" id="MF_00261"/>
    </source>
</evidence>
<evidence type="ECO:0000305" key="2"/>
<gene>
    <name evidence="1" type="primary">rpo11</name>
    <name evidence="1" type="synonym">rpoL</name>
    <name type="ordered locus">TV1462</name>
    <name type="ORF">TVG1510824</name>
</gene>
<dbReference type="EC" id="2.7.7.6" evidence="1"/>
<dbReference type="EMBL" id="BA000011">
    <property type="protein sequence ID" value="BAB60604.1"/>
    <property type="status" value="ALT_INIT"/>
    <property type="molecule type" value="Genomic_DNA"/>
</dbReference>
<dbReference type="RefSeq" id="WP_010917691.1">
    <property type="nucleotide sequence ID" value="NC_002689.2"/>
</dbReference>
<dbReference type="SMR" id="Q978F5"/>
<dbReference type="STRING" id="273116.gene:9382274"/>
<dbReference type="PaxDb" id="273116-14325701"/>
<dbReference type="GeneID" id="1442151"/>
<dbReference type="KEGG" id="tvo:TVG1510824"/>
<dbReference type="eggNOG" id="arCOG04111">
    <property type="taxonomic scope" value="Archaea"/>
</dbReference>
<dbReference type="HOGENOM" id="CLU_090381_5_2_2"/>
<dbReference type="OrthoDB" id="24205at2157"/>
<dbReference type="PhylomeDB" id="Q978F5"/>
<dbReference type="Proteomes" id="UP000001017">
    <property type="component" value="Chromosome"/>
</dbReference>
<dbReference type="GO" id="GO:0005737">
    <property type="term" value="C:cytoplasm"/>
    <property type="evidence" value="ECO:0007669"/>
    <property type="project" value="UniProtKB-SubCell"/>
</dbReference>
<dbReference type="GO" id="GO:0000428">
    <property type="term" value="C:DNA-directed RNA polymerase complex"/>
    <property type="evidence" value="ECO:0007669"/>
    <property type="project" value="UniProtKB-KW"/>
</dbReference>
<dbReference type="GO" id="GO:0003677">
    <property type="term" value="F:DNA binding"/>
    <property type="evidence" value="ECO:0007669"/>
    <property type="project" value="InterPro"/>
</dbReference>
<dbReference type="GO" id="GO:0003899">
    <property type="term" value="F:DNA-directed RNA polymerase activity"/>
    <property type="evidence" value="ECO:0007669"/>
    <property type="project" value="UniProtKB-UniRule"/>
</dbReference>
<dbReference type="GO" id="GO:0046983">
    <property type="term" value="F:protein dimerization activity"/>
    <property type="evidence" value="ECO:0007669"/>
    <property type="project" value="InterPro"/>
</dbReference>
<dbReference type="GO" id="GO:0006351">
    <property type="term" value="P:DNA-templated transcription"/>
    <property type="evidence" value="ECO:0007669"/>
    <property type="project" value="UniProtKB-UniRule"/>
</dbReference>
<dbReference type="Gene3D" id="3.30.1360.10">
    <property type="entry name" value="RNA polymerase, RBP11-like subunit"/>
    <property type="match status" value="1"/>
</dbReference>
<dbReference type="HAMAP" id="MF_00261">
    <property type="entry name" value="RNApol_arch_Rpo11"/>
    <property type="match status" value="1"/>
</dbReference>
<dbReference type="InterPro" id="IPR036603">
    <property type="entry name" value="RBP11-like"/>
</dbReference>
<dbReference type="InterPro" id="IPR009025">
    <property type="entry name" value="RBP11-like_dimer"/>
</dbReference>
<dbReference type="InterPro" id="IPR008193">
    <property type="entry name" value="RNA_pol_Rpb11_13-16kDa_CS"/>
</dbReference>
<dbReference type="InterPro" id="IPR022905">
    <property type="entry name" value="Rpo11-like"/>
</dbReference>
<dbReference type="NCBIfam" id="NF002241">
    <property type="entry name" value="PRK01146.2-5"/>
    <property type="match status" value="1"/>
</dbReference>
<dbReference type="Pfam" id="PF13656">
    <property type="entry name" value="RNA_pol_L_2"/>
    <property type="match status" value="1"/>
</dbReference>
<dbReference type="SUPFAM" id="SSF55257">
    <property type="entry name" value="RBP11-like subunits of RNA polymerase"/>
    <property type="match status" value="1"/>
</dbReference>
<dbReference type="PROSITE" id="PS01154">
    <property type="entry name" value="RNA_POL_L_13KD"/>
    <property type="match status" value="1"/>
</dbReference>
<feature type="chain" id="PRO_0000149342" description="DNA-directed RNA polymerase subunit Rpo11">
    <location>
        <begin position="1"/>
        <end position="111"/>
    </location>
</feature>
<proteinExistence type="inferred from homology"/>
<name>RPO11_THEVO</name>
<organism>
    <name type="scientific">Thermoplasma volcanium (strain ATCC 51530 / DSM 4299 / JCM 9571 / NBRC 15438 / GSS1)</name>
    <dbReference type="NCBI Taxonomy" id="273116"/>
    <lineage>
        <taxon>Archaea</taxon>
        <taxon>Methanobacteriati</taxon>
        <taxon>Thermoplasmatota</taxon>
        <taxon>Thermoplasmata</taxon>
        <taxon>Thermoplasmatales</taxon>
        <taxon>Thermoplasmataceae</taxon>
        <taxon>Thermoplasma</taxon>
    </lineage>
</organism>
<comment type="function">
    <text evidence="1">DNA-dependent RNA polymerase (RNAP) catalyzes the transcription of DNA into RNA using the four ribonucleoside triphosphates as substrates.</text>
</comment>
<comment type="catalytic activity">
    <reaction evidence="1">
        <text>RNA(n) + a ribonucleoside 5'-triphosphate = RNA(n+1) + diphosphate</text>
        <dbReference type="Rhea" id="RHEA:21248"/>
        <dbReference type="Rhea" id="RHEA-COMP:14527"/>
        <dbReference type="Rhea" id="RHEA-COMP:17342"/>
        <dbReference type="ChEBI" id="CHEBI:33019"/>
        <dbReference type="ChEBI" id="CHEBI:61557"/>
        <dbReference type="ChEBI" id="CHEBI:140395"/>
        <dbReference type="EC" id="2.7.7.6"/>
    </reaction>
</comment>
<comment type="subunit">
    <text evidence="1">Part of the RNA polymerase complex.</text>
</comment>
<comment type="subcellular location">
    <subcellularLocation>
        <location evidence="1">Cytoplasm</location>
    </subcellularLocation>
</comment>
<comment type="similarity">
    <text evidence="1">Belongs to the archaeal Rpo11/eukaryotic RPB11/RPC19 RNA polymerase subunit family.</text>
</comment>
<comment type="sequence caution" evidence="2">
    <conflict type="erroneous initiation">
        <sequence resource="EMBL-CDS" id="BAB60604"/>
    </conflict>
    <text>Extended N-terminus.</text>
</comment>
<keyword id="KW-0963">Cytoplasm</keyword>
<keyword id="KW-0240">DNA-directed RNA polymerase</keyword>
<keyword id="KW-0548">Nucleotidyltransferase</keyword>
<keyword id="KW-0804">Transcription</keyword>
<keyword id="KW-0808">Transferase</keyword>
<reference key="1">
    <citation type="journal article" date="2000" name="Proc. Natl. Acad. Sci. U.S.A.">
        <title>Archaeal adaptation to higher temperatures revealed by genomic sequence of Thermoplasma volcanium.</title>
        <authorList>
            <person name="Kawashima T."/>
            <person name="Amano N."/>
            <person name="Koike H."/>
            <person name="Makino S."/>
            <person name="Higuchi S."/>
            <person name="Kawashima-Ohya Y."/>
            <person name="Watanabe K."/>
            <person name="Yamazaki M."/>
            <person name="Kanehori K."/>
            <person name="Kawamoto T."/>
            <person name="Nunoshiba T."/>
            <person name="Yamamoto Y."/>
            <person name="Aramaki H."/>
            <person name="Makino K."/>
            <person name="Suzuki M."/>
        </authorList>
    </citation>
    <scope>NUCLEOTIDE SEQUENCE [LARGE SCALE GENOMIC DNA]</scope>
    <source>
        <strain>ATCC 51530 / DSM 4299 / JCM 9571 / NBRC 15438 / GSS1</strain>
    </source>
</reference>
<protein>
    <recommendedName>
        <fullName evidence="1">DNA-directed RNA polymerase subunit Rpo11</fullName>
        <ecNumber evidence="1">2.7.7.6</ecNumber>
    </recommendedName>
    <alternativeName>
        <fullName evidence="1">DNA-directed RNA polymerase subunit L</fullName>
    </alternativeName>
</protein>